<dbReference type="EMBL" id="BX294151">
    <property type="protein sequence ID" value="CAD78769.1"/>
    <property type="molecule type" value="Genomic_DNA"/>
</dbReference>
<dbReference type="RefSeq" id="NP_869312.1">
    <property type="nucleotide sequence ID" value="NC_005027.1"/>
</dbReference>
<dbReference type="RefSeq" id="WP_007327186.1">
    <property type="nucleotide sequence ID" value="NC_005027.1"/>
</dbReference>
<dbReference type="SMR" id="Q7UFB4"/>
<dbReference type="FunCoup" id="Q7UFB4">
    <property type="interactions" value="364"/>
</dbReference>
<dbReference type="STRING" id="243090.RB10219"/>
<dbReference type="EnsemblBacteria" id="CAD78769">
    <property type="protein sequence ID" value="CAD78769"/>
    <property type="gene ID" value="RB10219"/>
</dbReference>
<dbReference type="KEGG" id="rba:RB10219"/>
<dbReference type="PATRIC" id="fig|243090.15.peg.4934"/>
<dbReference type="eggNOG" id="COG0355">
    <property type="taxonomic scope" value="Bacteria"/>
</dbReference>
<dbReference type="HOGENOM" id="CLU_084338_2_1_0"/>
<dbReference type="InParanoid" id="Q7UFB4"/>
<dbReference type="OrthoDB" id="277064at2"/>
<dbReference type="Proteomes" id="UP000001025">
    <property type="component" value="Chromosome"/>
</dbReference>
<dbReference type="GO" id="GO:0005886">
    <property type="term" value="C:plasma membrane"/>
    <property type="evidence" value="ECO:0007669"/>
    <property type="project" value="UniProtKB-SubCell"/>
</dbReference>
<dbReference type="GO" id="GO:0045259">
    <property type="term" value="C:proton-transporting ATP synthase complex"/>
    <property type="evidence" value="ECO:0007669"/>
    <property type="project" value="UniProtKB-KW"/>
</dbReference>
<dbReference type="GO" id="GO:0005524">
    <property type="term" value="F:ATP binding"/>
    <property type="evidence" value="ECO:0007669"/>
    <property type="project" value="UniProtKB-UniRule"/>
</dbReference>
<dbReference type="GO" id="GO:0046933">
    <property type="term" value="F:proton-transporting ATP synthase activity, rotational mechanism"/>
    <property type="evidence" value="ECO:0007669"/>
    <property type="project" value="UniProtKB-UniRule"/>
</dbReference>
<dbReference type="GO" id="GO:0015986">
    <property type="term" value="P:proton motive force-driven ATP synthesis"/>
    <property type="evidence" value="ECO:0000318"/>
    <property type="project" value="GO_Central"/>
</dbReference>
<dbReference type="CDD" id="cd12152">
    <property type="entry name" value="F1-ATPase_delta"/>
    <property type="match status" value="1"/>
</dbReference>
<dbReference type="FunFam" id="2.60.15.10:FF:000017">
    <property type="entry name" value="ATP synthase epsilon chain"/>
    <property type="match status" value="1"/>
</dbReference>
<dbReference type="Gene3D" id="2.60.15.10">
    <property type="entry name" value="F0F1 ATP synthase delta/epsilon subunit, N-terminal"/>
    <property type="match status" value="1"/>
</dbReference>
<dbReference type="HAMAP" id="MF_00530">
    <property type="entry name" value="ATP_synth_epsil_bac"/>
    <property type="match status" value="1"/>
</dbReference>
<dbReference type="InterPro" id="IPR001469">
    <property type="entry name" value="ATP_synth_F1_dsu/esu"/>
</dbReference>
<dbReference type="InterPro" id="IPR020546">
    <property type="entry name" value="ATP_synth_F1_dsu/esu_N"/>
</dbReference>
<dbReference type="InterPro" id="IPR036771">
    <property type="entry name" value="ATPsynth_dsu/esu_N"/>
</dbReference>
<dbReference type="PANTHER" id="PTHR13822">
    <property type="entry name" value="ATP SYNTHASE DELTA/EPSILON CHAIN"/>
    <property type="match status" value="1"/>
</dbReference>
<dbReference type="PANTHER" id="PTHR13822:SF10">
    <property type="entry name" value="ATP SYNTHASE EPSILON CHAIN, CHLOROPLASTIC"/>
    <property type="match status" value="1"/>
</dbReference>
<dbReference type="Pfam" id="PF02823">
    <property type="entry name" value="ATP-synt_DE_N"/>
    <property type="match status" value="1"/>
</dbReference>
<dbReference type="SUPFAM" id="SSF51344">
    <property type="entry name" value="Epsilon subunit of F1F0-ATP synthase N-terminal domain"/>
    <property type="match status" value="1"/>
</dbReference>
<reference key="1">
    <citation type="journal article" date="2003" name="Proc. Natl. Acad. Sci. U.S.A.">
        <title>Complete genome sequence of the marine planctomycete Pirellula sp. strain 1.</title>
        <authorList>
            <person name="Gloeckner F.O."/>
            <person name="Kube M."/>
            <person name="Bauer M."/>
            <person name="Teeling H."/>
            <person name="Lombardot T."/>
            <person name="Ludwig W."/>
            <person name="Gade D."/>
            <person name="Beck A."/>
            <person name="Borzym K."/>
            <person name="Heitmann K."/>
            <person name="Rabus R."/>
            <person name="Schlesner H."/>
            <person name="Amann R."/>
            <person name="Reinhardt R."/>
        </authorList>
    </citation>
    <scope>NUCLEOTIDE SEQUENCE [LARGE SCALE GENOMIC DNA]</scope>
    <source>
        <strain>DSM 10527 / NCIMB 13988 / SH1</strain>
    </source>
</reference>
<protein>
    <recommendedName>
        <fullName evidence="1">ATP synthase epsilon chain</fullName>
    </recommendedName>
    <alternativeName>
        <fullName evidence="1">ATP synthase F1 sector epsilon subunit</fullName>
    </alternativeName>
    <alternativeName>
        <fullName evidence="1">F-ATPase epsilon subunit</fullName>
    </alternativeName>
</protein>
<name>ATPE_RHOBA</name>
<evidence type="ECO:0000255" key="1">
    <source>
        <dbReference type="HAMAP-Rule" id="MF_00530"/>
    </source>
</evidence>
<evidence type="ECO:0000256" key="2">
    <source>
        <dbReference type="SAM" id="MobiDB-lite"/>
    </source>
</evidence>
<gene>
    <name evidence="1" type="primary">atpC</name>
    <name type="ordered locus">RB10219</name>
</gene>
<comment type="function">
    <text evidence="1">Produces ATP from ADP in the presence of a proton gradient across the membrane.</text>
</comment>
<comment type="subunit">
    <text>F-type ATPases have 2 components, CF(1) - the catalytic core - and CF(0) - the membrane proton channel. CF(1) has five subunits: alpha(3), beta(3), gamma(1), delta(1), epsilon(1). CF(0) has three main subunits: a, b and c.</text>
</comment>
<comment type="subcellular location">
    <subcellularLocation>
        <location evidence="1">Cell inner membrane</location>
        <topology evidence="1">Peripheral membrane protein</topology>
    </subcellularLocation>
</comment>
<comment type="similarity">
    <text evidence="1">Belongs to the ATPase epsilon chain family.</text>
</comment>
<proteinExistence type="inferred from homology"/>
<keyword id="KW-0066">ATP synthesis</keyword>
<keyword id="KW-0997">Cell inner membrane</keyword>
<keyword id="KW-1003">Cell membrane</keyword>
<keyword id="KW-0139">CF(1)</keyword>
<keyword id="KW-0375">Hydrogen ion transport</keyword>
<keyword id="KW-0406">Ion transport</keyword>
<keyword id="KW-0472">Membrane</keyword>
<keyword id="KW-1185">Reference proteome</keyword>
<keyword id="KW-0813">Transport</keyword>
<sequence>MSIRCVVVTPERTELDREADFVALPMFDGELGVQRGRAPMIGRLGYGVLRLQTVSGPERYFVDGGFAQVEDDVVNVLTGRAIPVDLLDNDEATKTLAEALDMPSSTPEQAQIKDAAVRRARGQLRASR</sequence>
<accession>Q7UFB4</accession>
<organism>
    <name type="scientific">Rhodopirellula baltica (strain DSM 10527 / NCIMB 13988 / SH1)</name>
    <dbReference type="NCBI Taxonomy" id="243090"/>
    <lineage>
        <taxon>Bacteria</taxon>
        <taxon>Pseudomonadati</taxon>
        <taxon>Planctomycetota</taxon>
        <taxon>Planctomycetia</taxon>
        <taxon>Pirellulales</taxon>
        <taxon>Pirellulaceae</taxon>
        <taxon>Rhodopirellula</taxon>
    </lineage>
</organism>
<feature type="chain" id="PRO_0000188187" description="ATP synthase epsilon chain">
    <location>
        <begin position="1"/>
        <end position="128"/>
    </location>
</feature>
<feature type="region of interest" description="Disordered" evidence="2">
    <location>
        <begin position="98"/>
        <end position="128"/>
    </location>
</feature>
<feature type="compositionally biased region" description="Basic residues" evidence="2">
    <location>
        <begin position="118"/>
        <end position="128"/>
    </location>
</feature>